<reference key="1">
    <citation type="journal article" date="2000" name="Nature">
        <title>The genome sequence of the plant pathogen Xylella fastidiosa.</title>
        <authorList>
            <person name="Simpson A.J.G."/>
            <person name="Reinach F.C."/>
            <person name="Arruda P."/>
            <person name="Abreu F.A."/>
            <person name="Acencio M."/>
            <person name="Alvarenga R."/>
            <person name="Alves L.M.C."/>
            <person name="Araya J.E."/>
            <person name="Baia G.S."/>
            <person name="Baptista C.S."/>
            <person name="Barros M.H."/>
            <person name="Bonaccorsi E.D."/>
            <person name="Bordin S."/>
            <person name="Bove J.M."/>
            <person name="Briones M.R.S."/>
            <person name="Bueno M.R.P."/>
            <person name="Camargo A.A."/>
            <person name="Camargo L.E.A."/>
            <person name="Carraro D.M."/>
            <person name="Carrer H."/>
            <person name="Colauto N.B."/>
            <person name="Colombo C."/>
            <person name="Costa F.F."/>
            <person name="Costa M.C.R."/>
            <person name="Costa-Neto C.M."/>
            <person name="Coutinho L.L."/>
            <person name="Cristofani M."/>
            <person name="Dias-Neto E."/>
            <person name="Docena C."/>
            <person name="El-Dorry H."/>
            <person name="Facincani A.P."/>
            <person name="Ferreira A.J.S."/>
            <person name="Ferreira V.C.A."/>
            <person name="Ferro J.A."/>
            <person name="Fraga J.S."/>
            <person name="Franca S.C."/>
            <person name="Franco M.C."/>
            <person name="Frohme M."/>
            <person name="Furlan L.R."/>
            <person name="Garnier M."/>
            <person name="Goldman G.H."/>
            <person name="Goldman M.H.S."/>
            <person name="Gomes S.L."/>
            <person name="Gruber A."/>
            <person name="Ho P.L."/>
            <person name="Hoheisel J.D."/>
            <person name="Junqueira M.L."/>
            <person name="Kemper E.L."/>
            <person name="Kitajima J.P."/>
            <person name="Krieger J.E."/>
            <person name="Kuramae E.E."/>
            <person name="Laigret F."/>
            <person name="Lambais M.R."/>
            <person name="Leite L.C.C."/>
            <person name="Lemos E.G.M."/>
            <person name="Lemos M.V.F."/>
            <person name="Lopes S.A."/>
            <person name="Lopes C.R."/>
            <person name="Machado J.A."/>
            <person name="Machado M.A."/>
            <person name="Madeira A.M.B.N."/>
            <person name="Madeira H.M.F."/>
            <person name="Marino C.L."/>
            <person name="Marques M.V."/>
            <person name="Martins E.A.L."/>
            <person name="Martins E.M.F."/>
            <person name="Matsukuma A.Y."/>
            <person name="Menck C.F.M."/>
            <person name="Miracca E.C."/>
            <person name="Miyaki C.Y."/>
            <person name="Monteiro-Vitorello C.B."/>
            <person name="Moon D.H."/>
            <person name="Nagai M.A."/>
            <person name="Nascimento A.L.T.O."/>
            <person name="Netto L.E.S."/>
            <person name="Nhani A. Jr."/>
            <person name="Nobrega F.G."/>
            <person name="Nunes L.R."/>
            <person name="Oliveira M.A."/>
            <person name="de Oliveira M.C."/>
            <person name="de Oliveira R.C."/>
            <person name="Palmieri D.A."/>
            <person name="Paris A."/>
            <person name="Peixoto B.R."/>
            <person name="Pereira G.A.G."/>
            <person name="Pereira H.A. Jr."/>
            <person name="Pesquero J.B."/>
            <person name="Quaggio R.B."/>
            <person name="Roberto P.G."/>
            <person name="Rodrigues V."/>
            <person name="de Rosa A.J.M."/>
            <person name="de Rosa V.E. Jr."/>
            <person name="de Sa R.G."/>
            <person name="Santelli R.V."/>
            <person name="Sawasaki H.E."/>
            <person name="da Silva A.C.R."/>
            <person name="da Silva A.M."/>
            <person name="da Silva F.R."/>
            <person name="Silva W.A. Jr."/>
            <person name="da Silveira J.F."/>
            <person name="Silvestri M.L.Z."/>
            <person name="Siqueira W.J."/>
            <person name="de Souza A.A."/>
            <person name="de Souza A.P."/>
            <person name="Terenzi M.F."/>
            <person name="Truffi D."/>
            <person name="Tsai S.M."/>
            <person name="Tsuhako M.H."/>
            <person name="Vallada H."/>
            <person name="Van Sluys M.A."/>
            <person name="Verjovski-Almeida S."/>
            <person name="Vettore A.L."/>
            <person name="Zago M.A."/>
            <person name="Zatz M."/>
            <person name="Meidanis J."/>
            <person name="Setubal J.C."/>
        </authorList>
    </citation>
    <scope>NUCLEOTIDE SEQUENCE [LARGE SCALE GENOMIC DNA]</scope>
    <source>
        <strain>9a5c</strain>
    </source>
</reference>
<dbReference type="EC" id="2.7.7.38" evidence="1"/>
<dbReference type="EMBL" id="AE003849">
    <property type="protein sequence ID" value="AAF85098.1"/>
    <property type="molecule type" value="Genomic_DNA"/>
</dbReference>
<dbReference type="PIR" id="H82575">
    <property type="entry name" value="H82575"/>
</dbReference>
<dbReference type="RefSeq" id="WP_010894746.1">
    <property type="nucleotide sequence ID" value="NC_002488.3"/>
</dbReference>
<dbReference type="SMR" id="Q9PB46"/>
<dbReference type="STRING" id="160492.XF_2299"/>
<dbReference type="KEGG" id="xfa:XF_2299"/>
<dbReference type="eggNOG" id="COG1212">
    <property type="taxonomic scope" value="Bacteria"/>
</dbReference>
<dbReference type="HOGENOM" id="CLU_065038_1_0_6"/>
<dbReference type="BRENDA" id="2.7.7.38">
    <property type="organism ID" value="6734"/>
</dbReference>
<dbReference type="UniPathway" id="UPA00030"/>
<dbReference type="UniPathway" id="UPA00358">
    <property type="reaction ID" value="UER00476"/>
</dbReference>
<dbReference type="Proteomes" id="UP000000812">
    <property type="component" value="Chromosome"/>
</dbReference>
<dbReference type="GO" id="GO:0005829">
    <property type="term" value="C:cytosol"/>
    <property type="evidence" value="ECO:0007669"/>
    <property type="project" value="TreeGrafter"/>
</dbReference>
<dbReference type="GO" id="GO:0008690">
    <property type="term" value="F:3-deoxy-manno-octulosonate cytidylyltransferase activity"/>
    <property type="evidence" value="ECO:0007669"/>
    <property type="project" value="UniProtKB-UniRule"/>
</dbReference>
<dbReference type="GO" id="GO:0033468">
    <property type="term" value="P:CMP-keto-3-deoxy-D-manno-octulosonic acid biosynthetic process"/>
    <property type="evidence" value="ECO:0007669"/>
    <property type="project" value="UniProtKB-UniRule"/>
</dbReference>
<dbReference type="GO" id="GO:0009103">
    <property type="term" value="P:lipopolysaccharide biosynthetic process"/>
    <property type="evidence" value="ECO:0007669"/>
    <property type="project" value="UniProtKB-UniRule"/>
</dbReference>
<dbReference type="CDD" id="cd02517">
    <property type="entry name" value="CMP-KDO-Synthetase"/>
    <property type="match status" value="1"/>
</dbReference>
<dbReference type="FunFam" id="3.90.550.10:FF:000011">
    <property type="entry name" value="3-deoxy-manno-octulosonate cytidylyltransferase"/>
    <property type="match status" value="1"/>
</dbReference>
<dbReference type="Gene3D" id="3.90.550.10">
    <property type="entry name" value="Spore Coat Polysaccharide Biosynthesis Protein SpsA, Chain A"/>
    <property type="match status" value="1"/>
</dbReference>
<dbReference type="HAMAP" id="MF_00057">
    <property type="entry name" value="KdsB"/>
    <property type="match status" value="1"/>
</dbReference>
<dbReference type="InterPro" id="IPR003329">
    <property type="entry name" value="Cytidylyl_trans"/>
</dbReference>
<dbReference type="InterPro" id="IPR004528">
    <property type="entry name" value="KdsB"/>
</dbReference>
<dbReference type="InterPro" id="IPR029044">
    <property type="entry name" value="Nucleotide-diphossugar_trans"/>
</dbReference>
<dbReference type="NCBIfam" id="TIGR00466">
    <property type="entry name" value="kdsB"/>
    <property type="match status" value="1"/>
</dbReference>
<dbReference type="NCBIfam" id="NF003952">
    <property type="entry name" value="PRK05450.1-5"/>
    <property type="match status" value="1"/>
</dbReference>
<dbReference type="PANTHER" id="PTHR42866">
    <property type="entry name" value="3-DEOXY-MANNO-OCTULOSONATE CYTIDYLYLTRANSFERASE"/>
    <property type="match status" value="1"/>
</dbReference>
<dbReference type="PANTHER" id="PTHR42866:SF2">
    <property type="entry name" value="3-DEOXY-MANNO-OCTULOSONATE CYTIDYLYLTRANSFERASE, MITOCHONDRIAL"/>
    <property type="match status" value="1"/>
</dbReference>
<dbReference type="Pfam" id="PF02348">
    <property type="entry name" value="CTP_transf_3"/>
    <property type="match status" value="1"/>
</dbReference>
<dbReference type="SUPFAM" id="SSF53448">
    <property type="entry name" value="Nucleotide-diphospho-sugar transferases"/>
    <property type="match status" value="1"/>
</dbReference>
<protein>
    <recommendedName>
        <fullName evidence="1">3-deoxy-manno-octulosonate cytidylyltransferase</fullName>
        <ecNumber evidence="1">2.7.7.38</ecNumber>
    </recommendedName>
    <alternativeName>
        <fullName evidence="1">CMP-2-keto-3-deoxyoctulosonic acid synthase</fullName>
        <shortName evidence="1">CKS</shortName>
        <shortName evidence="1">CMP-KDO synthase</shortName>
    </alternativeName>
</protein>
<evidence type="ECO:0000255" key="1">
    <source>
        <dbReference type="HAMAP-Rule" id="MF_00057"/>
    </source>
</evidence>
<accession>Q9PB46</accession>
<name>KDSB_XYLFA</name>
<keyword id="KW-0963">Cytoplasm</keyword>
<keyword id="KW-0448">Lipopolysaccharide biosynthesis</keyword>
<keyword id="KW-0548">Nucleotidyltransferase</keyword>
<keyword id="KW-0808">Transferase</keyword>
<proteinExistence type="inferred from homology"/>
<comment type="function">
    <text evidence="1">Activates KDO (a required 8-carbon sugar) for incorporation into bacterial lipopolysaccharide in Gram-negative bacteria.</text>
</comment>
<comment type="catalytic activity">
    <reaction evidence="1">
        <text>3-deoxy-alpha-D-manno-oct-2-ulosonate + CTP = CMP-3-deoxy-beta-D-manno-octulosonate + diphosphate</text>
        <dbReference type="Rhea" id="RHEA:23448"/>
        <dbReference type="ChEBI" id="CHEBI:33019"/>
        <dbReference type="ChEBI" id="CHEBI:37563"/>
        <dbReference type="ChEBI" id="CHEBI:85986"/>
        <dbReference type="ChEBI" id="CHEBI:85987"/>
        <dbReference type="EC" id="2.7.7.38"/>
    </reaction>
</comment>
<comment type="pathway">
    <text evidence="1">Nucleotide-sugar biosynthesis; CMP-3-deoxy-D-manno-octulosonate biosynthesis; CMP-3-deoxy-D-manno-octulosonate from 3-deoxy-D-manno-octulosonate and CTP: step 1/1.</text>
</comment>
<comment type="pathway">
    <text evidence="1">Bacterial outer membrane biogenesis; lipopolysaccharide biosynthesis.</text>
</comment>
<comment type="subcellular location">
    <subcellularLocation>
        <location evidence="1">Cytoplasm</location>
    </subcellularLocation>
</comment>
<comment type="similarity">
    <text evidence="1">Belongs to the KdsB family.</text>
</comment>
<gene>
    <name evidence="1" type="primary">kdsB</name>
    <name type="ordered locus">XF_2299</name>
</gene>
<sequence length="257" mass="27883">MSLEIVPFVVAIPARFSASRLPGKPLRLLGGRPLIHRVAERALSAGAREVWVATDDVRIAEAVASLDGVHVAMTANTHLSGSDRLAECARIAGWDPEMCVVNLQGDEPFAPAAGIRAVAALLHHSNADMATLATTIDKSEDLFNPNIVKLVCNAHGEALYFSRAPIPWNRDTFATTPEPTPLGPWLRHIGLYACNAGFLQRFTTMQPGTLEQIESLEQLRVLEAGHRIAVRITPEHFPPGIDTPEDLARAEKALEDV</sequence>
<organism>
    <name type="scientific">Xylella fastidiosa (strain 9a5c)</name>
    <dbReference type="NCBI Taxonomy" id="160492"/>
    <lineage>
        <taxon>Bacteria</taxon>
        <taxon>Pseudomonadati</taxon>
        <taxon>Pseudomonadota</taxon>
        <taxon>Gammaproteobacteria</taxon>
        <taxon>Lysobacterales</taxon>
        <taxon>Lysobacteraceae</taxon>
        <taxon>Xylella</taxon>
    </lineage>
</organism>
<feature type="chain" id="PRO_0000370176" description="3-deoxy-manno-octulosonate cytidylyltransferase">
    <location>
        <begin position="1"/>
        <end position="257"/>
    </location>
</feature>